<protein>
    <recommendedName>
        <fullName evidence="1">UDP-3-O-acyl-N-acetylglucosamine deacetylase</fullName>
        <shortName evidence="1">UDP-3-O-acyl-GlcNAc deacetylase</shortName>
        <ecNumber evidence="1">3.5.1.108</ecNumber>
    </recommendedName>
    <alternativeName>
        <fullName evidence="1">UDP-3-O-[R-3-hydroxymyristoyl]-N-acetylglucosamine deacetylase</fullName>
    </alternativeName>
</protein>
<proteinExistence type="inferred from homology"/>
<accession>Q0K6N1</accession>
<keyword id="KW-0378">Hydrolase</keyword>
<keyword id="KW-0441">Lipid A biosynthesis</keyword>
<keyword id="KW-0444">Lipid biosynthesis</keyword>
<keyword id="KW-0443">Lipid metabolism</keyword>
<keyword id="KW-0479">Metal-binding</keyword>
<keyword id="KW-1185">Reference proteome</keyword>
<keyword id="KW-0862">Zinc</keyword>
<gene>
    <name evidence="1" type="primary">lpxC</name>
    <name type="ordered locus">H16_A3266</name>
</gene>
<name>LPXC_CUPNH</name>
<dbReference type="EC" id="3.5.1.108" evidence="1"/>
<dbReference type="EMBL" id="AM260479">
    <property type="protein sequence ID" value="CAJ94340.1"/>
    <property type="molecule type" value="Genomic_DNA"/>
</dbReference>
<dbReference type="RefSeq" id="WP_010814762.1">
    <property type="nucleotide sequence ID" value="NZ_CP039287.1"/>
</dbReference>
<dbReference type="SMR" id="Q0K6N1"/>
<dbReference type="STRING" id="381666.H16_A3266"/>
<dbReference type="KEGG" id="reh:H16_A3266"/>
<dbReference type="eggNOG" id="COG0774">
    <property type="taxonomic scope" value="Bacteria"/>
</dbReference>
<dbReference type="HOGENOM" id="CLU_046528_1_0_4"/>
<dbReference type="OrthoDB" id="9802746at2"/>
<dbReference type="UniPathway" id="UPA00359">
    <property type="reaction ID" value="UER00478"/>
</dbReference>
<dbReference type="Proteomes" id="UP000008210">
    <property type="component" value="Chromosome 1"/>
</dbReference>
<dbReference type="GO" id="GO:0016020">
    <property type="term" value="C:membrane"/>
    <property type="evidence" value="ECO:0007669"/>
    <property type="project" value="GOC"/>
</dbReference>
<dbReference type="GO" id="GO:0046872">
    <property type="term" value="F:metal ion binding"/>
    <property type="evidence" value="ECO:0007669"/>
    <property type="project" value="UniProtKB-KW"/>
</dbReference>
<dbReference type="GO" id="GO:0103117">
    <property type="term" value="F:UDP-3-O-acyl-N-acetylglucosamine deacetylase activity"/>
    <property type="evidence" value="ECO:0007669"/>
    <property type="project" value="UniProtKB-UniRule"/>
</dbReference>
<dbReference type="GO" id="GO:0009245">
    <property type="term" value="P:lipid A biosynthetic process"/>
    <property type="evidence" value="ECO:0007669"/>
    <property type="project" value="UniProtKB-UniRule"/>
</dbReference>
<dbReference type="Gene3D" id="3.30.230.20">
    <property type="entry name" value="lpxc deacetylase, domain 1"/>
    <property type="match status" value="1"/>
</dbReference>
<dbReference type="Gene3D" id="3.30.1700.10">
    <property type="entry name" value="lpxc deacetylase, domain 2"/>
    <property type="match status" value="1"/>
</dbReference>
<dbReference type="HAMAP" id="MF_00388">
    <property type="entry name" value="LpxC"/>
    <property type="match status" value="1"/>
</dbReference>
<dbReference type="InterPro" id="IPR020568">
    <property type="entry name" value="Ribosomal_Su5_D2-typ_SF"/>
</dbReference>
<dbReference type="InterPro" id="IPR004463">
    <property type="entry name" value="UDP-acyl_GlcNac_deAcase"/>
</dbReference>
<dbReference type="InterPro" id="IPR011334">
    <property type="entry name" value="UDP-acyl_GlcNac_deAcase_C"/>
</dbReference>
<dbReference type="InterPro" id="IPR015870">
    <property type="entry name" value="UDP-acyl_N-AcGlcN_deAcase_N"/>
</dbReference>
<dbReference type="NCBIfam" id="TIGR00325">
    <property type="entry name" value="lpxC"/>
    <property type="match status" value="1"/>
</dbReference>
<dbReference type="PANTHER" id="PTHR33694">
    <property type="entry name" value="UDP-3-O-ACYL-N-ACETYLGLUCOSAMINE DEACETYLASE 1, MITOCHONDRIAL-RELATED"/>
    <property type="match status" value="1"/>
</dbReference>
<dbReference type="PANTHER" id="PTHR33694:SF1">
    <property type="entry name" value="UDP-3-O-ACYL-N-ACETYLGLUCOSAMINE DEACETYLASE 1, MITOCHONDRIAL-RELATED"/>
    <property type="match status" value="1"/>
</dbReference>
<dbReference type="Pfam" id="PF03331">
    <property type="entry name" value="LpxC"/>
    <property type="match status" value="1"/>
</dbReference>
<dbReference type="SUPFAM" id="SSF54211">
    <property type="entry name" value="Ribosomal protein S5 domain 2-like"/>
    <property type="match status" value="2"/>
</dbReference>
<reference key="1">
    <citation type="journal article" date="2006" name="Nat. Biotechnol.">
        <title>Genome sequence of the bioplastic-producing 'Knallgas' bacterium Ralstonia eutropha H16.</title>
        <authorList>
            <person name="Pohlmann A."/>
            <person name="Fricke W.F."/>
            <person name="Reinecke F."/>
            <person name="Kusian B."/>
            <person name="Liesegang H."/>
            <person name="Cramm R."/>
            <person name="Eitinger T."/>
            <person name="Ewering C."/>
            <person name="Poetter M."/>
            <person name="Schwartz E."/>
            <person name="Strittmatter A."/>
            <person name="Voss I."/>
            <person name="Gottschalk G."/>
            <person name="Steinbuechel A."/>
            <person name="Friedrich B."/>
            <person name="Bowien B."/>
        </authorList>
    </citation>
    <scope>NUCLEOTIDE SEQUENCE [LARGE SCALE GENOMIC DNA]</scope>
    <source>
        <strain>ATCC 17699 / DSM 428 / KCTC 22496 / NCIMB 10442 / H16 / Stanier 337</strain>
    </source>
</reference>
<sequence>MLKQRTIKSLVKTVGIGLHSGRKVTLTLRPAPADTGIVFTRVDLPEAVEIPVAASAIGDTRLASVLQKDGARVSTVEHLMSACAGLGIDNLYVDVDAEEIPIMDGSAASFVFLLQSAGIEEQNALKTFIRVKKAVEVREGDKLARLEPFFGFKLSFTIDFRHPAVDKTGQTFSIDFADTSYVREIARARTFGFAHEVEALREMGLARGGSLDNAIVLDEHRMLNNEELRYGDEFVRHKILDAIGDLYVVGHPLIGAYVANKSGHGLNNQLLRALLADQEAYELVTFDRVEEAPVAFLPQAQPAFA</sequence>
<feature type="chain" id="PRO_1000013222" description="UDP-3-O-acyl-N-acetylglucosamine deacetylase">
    <location>
        <begin position="1"/>
        <end position="305"/>
    </location>
</feature>
<feature type="active site" description="Proton donor" evidence="1">
    <location>
        <position position="264"/>
    </location>
</feature>
<feature type="binding site" evidence="1">
    <location>
        <position position="78"/>
    </location>
    <ligand>
        <name>Zn(2+)</name>
        <dbReference type="ChEBI" id="CHEBI:29105"/>
    </ligand>
</feature>
<feature type="binding site" evidence="1">
    <location>
        <position position="237"/>
    </location>
    <ligand>
        <name>Zn(2+)</name>
        <dbReference type="ChEBI" id="CHEBI:29105"/>
    </ligand>
</feature>
<feature type="binding site" evidence="1">
    <location>
        <position position="241"/>
    </location>
    <ligand>
        <name>Zn(2+)</name>
        <dbReference type="ChEBI" id="CHEBI:29105"/>
    </ligand>
</feature>
<organism>
    <name type="scientific">Cupriavidus necator (strain ATCC 17699 / DSM 428 / KCTC 22496 / NCIMB 10442 / H16 / Stanier 337)</name>
    <name type="common">Ralstonia eutropha</name>
    <dbReference type="NCBI Taxonomy" id="381666"/>
    <lineage>
        <taxon>Bacteria</taxon>
        <taxon>Pseudomonadati</taxon>
        <taxon>Pseudomonadota</taxon>
        <taxon>Betaproteobacteria</taxon>
        <taxon>Burkholderiales</taxon>
        <taxon>Burkholderiaceae</taxon>
        <taxon>Cupriavidus</taxon>
    </lineage>
</organism>
<comment type="function">
    <text evidence="1">Catalyzes the hydrolysis of UDP-3-O-myristoyl-N-acetylglucosamine to form UDP-3-O-myristoylglucosamine and acetate, the committed step in lipid A biosynthesis.</text>
</comment>
<comment type="catalytic activity">
    <reaction evidence="1">
        <text>a UDP-3-O-[(3R)-3-hydroxyacyl]-N-acetyl-alpha-D-glucosamine + H2O = a UDP-3-O-[(3R)-3-hydroxyacyl]-alpha-D-glucosamine + acetate</text>
        <dbReference type="Rhea" id="RHEA:67816"/>
        <dbReference type="ChEBI" id="CHEBI:15377"/>
        <dbReference type="ChEBI" id="CHEBI:30089"/>
        <dbReference type="ChEBI" id="CHEBI:137740"/>
        <dbReference type="ChEBI" id="CHEBI:173225"/>
        <dbReference type="EC" id="3.5.1.108"/>
    </reaction>
</comment>
<comment type="cofactor">
    <cofactor evidence="1">
        <name>Zn(2+)</name>
        <dbReference type="ChEBI" id="CHEBI:29105"/>
    </cofactor>
</comment>
<comment type="pathway">
    <text evidence="1">Glycolipid biosynthesis; lipid IV(A) biosynthesis; lipid IV(A) from (3R)-3-hydroxytetradecanoyl-[acyl-carrier-protein] and UDP-N-acetyl-alpha-D-glucosamine: step 2/6.</text>
</comment>
<comment type="similarity">
    <text evidence="1">Belongs to the LpxC family.</text>
</comment>
<evidence type="ECO:0000255" key="1">
    <source>
        <dbReference type="HAMAP-Rule" id="MF_00388"/>
    </source>
</evidence>